<sequence>MDLVEAEAEEQPPDEDGDEEGYVEADPAGRFIRYDEIVGSGAVKTVYKAFDKLEGVEVAWSQSRIDDSVMGSSKKMKQLNTEIQLLKTLKHKNIEKMFASWVDGEKKTVNIITELFTSGSLTQYRRKHKKVNMKAMKRWAIQILTGLEYLHSQKPAIIHRDLKCDNIFINGNHGKVKIGDFGLATFMQQQKKSIKGTLEFMAPELLTGHYNELVDIYSFGMCMLEMVTCEYPYSECQGMAHIFKKIDEGKKPAAFYKIKDAEVRSFIENCLAPVENRMSATELLKSSFLQDDDLISVSLVKNMSEDGQQPVSCMLRKGEFLLTGNVDVASHVDLWLRFPDPSGCFKSVEFPFNLTEDTSLSVAVEMVEQFGLTQDSRPIIAQLIDAFLVILIPEWTPCVAIRQVVSEGANGLTIEKR</sequence>
<proteinExistence type="evidence at transcript level"/>
<keyword id="KW-0067">ATP-binding</keyword>
<keyword id="KW-0418">Kinase</keyword>
<keyword id="KW-0547">Nucleotide-binding</keyword>
<keyword id="KW-1185">Reference proteome</keyword>
<keyword id="KW-0723">Serine/threonine-protein kinase</keyword>
<keyword id="KW-0808">Transferase</keyword>
<organism>
    <name type="scientific">Oryza sativa subsp. japonica</name>
    <name type="common">Rice</name>
    <dbReference type="NCBI Taxonomy" id="39947"/>
    <lineage>
        <taxon>Eukaryota</taxon>
        <taxon>Viridiplantae</taxon>
        <taxon>Streptophyta</taxon>
        <taxon>Embryophyta</taxon>
        <taxon>Tracheophyta</taxon>
        <taxon>Spermatophyta</taxon>
        <taxon>Magnoliopsida</taxon>
        <taxon>Liliopsida</taxon>
        <taxon>Poales</taxon>
        <taxon>Poaceae</taxon>
        <taxon>BOP clade</taxon>
        <taxon>Oryzoideae</taxon>
        <taxon>Oryzeae</taxon>
        <taxon>Oryzinae</taxon>
        <taxon>Oryza</taxon>
        <taxon>Oryza sativa</taxon>
    </lineage>
</organism>
<protein>
    <recommendedName>
        <fullName>Probable serine/threonine-protein kinase WNK9</fullName>
        <shortName>OsWNK9</shortName>
        <ecNumber>2.7.11.1</ecNumber>
    </recommendedName>
    <alternativeName>
        <fullName>Protein kinase with no lysine 9</fullName>
    </alternativeName>
</protein>
<feature type="chain" id="PRO_0000351679" description="Probable serine/threonine-protein kinase WNK9">
    <location>
        <begin position="1"/>
        <end position="417"/>
    </location>
</feature>
<feature type="domain" description="Protein kinase" evidence="3">
    <location>
        <begin position="32"/>
        <end position="289"/>
    </location>
</feature>
<feature type="region of interest" description="Disordered" evidence="4">
    <location>
        <begin position="1"/>
        <end position="23"/>
    </location>
</feature>
<feature type="active site" description="Proton acceptor" evidence="2">
    <location>
        <position position="180"/>
    </location>
</feature>
<feature type="binding site" evidence="1">
    <location>
        <begin position="113"/>
        <end position="116"/>
    </location>
    <ligand>
        <name>ATP</name>
        <dbReference type="ChEBI" id="CHEBI:30616"/>
    </ligand>
</feature>
<feature type="binding site" evidence="1">
    <location>
        <position position="163"/>
    </location>
    <ligand>
        <name>ATP</name>
        <dbReference type="ChEBI" id="CHEBI:30616"/>
    </ligand>
</feature>
<evidence type="ECO:0000250" key="1">
    <source>
        <dbReference type="UniProtKB" id="Q9H4A3"/>
    </source>
</evidence>
<evidence type="ECO:0000250" key="2">
    <source>
        <dbReference type="UniProtKB" id="Q9JIH7"/>
    </source>
</evidence>
<evidence type="ECO:0000255" key="3">
    <source>
        <dbReference type="PROSITE-ProRule" id="PRU00159"/>
    </source>
</evidence>
<evidence type="ECO:0000256" key="4">
    <source>
        <dbReference type="SAM" id="MobiDB-lite"/>
    </source>
</evidence>
<reference key="1">
    <citation type="journal article" date="2005" name="BMC Biol.">
        <title>The sequence of rice chromosomes 11 and 12, rich in disease resistance genes and recent gene duplications.</title>
        <authorList>
            <consortium name="The rice chromosomes 11 and 12 sequencing consortia"/>
        </authorList>
    </citation>
    <scope>NUCLEOTIDE SEQUENCE [LARGE SCALE GENOMIC DNA]</scope>
    <source>
        <strain>cv. Nipponbare</strain>
    </source>
</reference>
<reference key="2">
    <citation type="journal article" date="2005" name="Nature">
        <title>The map-based sequence of the rice genome.</title>
        <authorList>
            <consortium name="International rice genome sequencing project (IRGSP)"/>
        </authorList>
    </citation>
    <scope>NUCLEOTIDE SEQUENCE [LARGE SCALE GENOMIC DNA]</scope>
    <source>
        <strain>cv. Nipponbare</strain>
    </source>
</reference>
<reference key="3">
    <citation type="journal article" date="2008" name="Nucleic Acids Res.">
        <title>The rice annotation project database (RAP-DB): 2008 update.</title>
        <authorList>
            <consortium name="The rice annotation project (RAP)"/>
        </authorList>
    </citation>
    <scope>GENOME REANNOTATION</scope>
    <source>
        <strain>cv. Nipponbare</strain>
    </source>
</reference>
<reference key="4">
    <citation type="journal article" date="2013" name="Rice">
        <title>Improvement of the Oryza sativa Nipponbare reference genome using next generation sequence and optical map data.</title>
        <authorList>
            <person name="Kawahara Y."/>
            <person name="de la Bastide M."/>
            <person name="Hamilton J.P."/>
            <person name="Kanamori H."/>
            <person name="McCombie W.R."/>
            <person name="Ouyang S."/>
            <person name="Schwartz D.C."/>
            <person name="Tanaka T."/>
            <person name="Wu J."/>
            <person name="Zhou S."/>
            <person name="Childs K.L."/>
            <person name="Davidson R.M."/>
            <person name="Lin H."/>
            <person name="Quesada-Ocampo L."/>
            <person name="Vaillancourt B."/>
            <person name="Sakai H."/>
            <person name="Lee S.S."/>
            <person name="Kim J."/>
            <person name="Numa H."/>
            <person name="Itoh T."/>
            <person name="Buell C.R."/>
            <person name="Matsumoto T."/>
        </authorList>
    </citation>
    <scope>GENOME REANNOTATION</scope>
    <source>
        <strain>cv. Nipponbare</strain>
    </source>
</reference>
<reference key="5">
    <citation type="journal article" date="2003" name="Science">
        <title>Collection, mapping, and annotation of over 28,000 cDNA clones from japonica rice.</title>
        <authorList>
            <consortium name="The rice full-length cDNA consortium"/>
        </authorList>
    </citation>
    <scope>NUCLEOTIDE SEQUENCE [LARGE SCALE MRNA]</scope>
    <source>
        <strain>cv. Nipponbare</strain>
    </source>
</reference>
<dbReference type="EC" id="2.7.11.1"/>
<dbReference type="EMBL" id="DP000011">
    <property type="protein sequence ID" value="ABA96547.1"/>
    <property type="molecule type" value="Genomic_DNA"/>
</dbReference>
<dbReference type="EMBL" id="AP008218">
    <property type="protein sequence ID" value="BAF29241.1"/>
    <property type="molecule type" value="Genomic_DNA"/>
</dbReference>
<dbReference type="EMBL" id="AP014968">
    <property type="protein sequence ID" value="BAT15996.1"/>
    <property type="molecule type" value="Genomic_DNA"/>
</dbReference>
<dbReference type="EMBL" id="AK073772">
    <property type="protein sequence ID" value="BAG93630.1"/>
    <property type="molecule type" value="mRNA"/>
</dbReference>
<dbReference type="RefSeq" id="XP_015620490.1">
    <property type="nucleotide sequence ID" value="XM_015765004.1"/>
</dbReference>
<dbReference type="SMR" id="Q2QXC6"/>
<dbReference type="FunCoup" id="Q2QXC6">
    <property type="interactions" value="747"/>
</dbReference>
<dbReference type="STRING" id="39947.Q2QXC6"/>
<dbReference type="PaxDb" id="39947-Q2QXC6"/>
<dbReference type="EnsemblPlants" id="Os12t0162100-02">
    <property type="protein sequence ID" value="Os12t0162100-02"/>
    <property type="gene ID" value="Os12g0162100"/>
</dbReference>
<dbReference type="Gramene" id="Os12t0162100-02">
    <property type="protein sequence ID" value="Os12t0162100-02"/>
    <property type="gene ID" value="Os12g0162100"/>
</dbReference>
<dbReference type="KEGG" id="dosa:Os12g0162100"/>
<dbReference type="eggNOG" id="KOG0584">
    <property type="taxonomic scope" value="Eukaryota"/>
</dbReference>
<dbReference type="HOGENOM" id="CLU_000288_142_5_1"/>
<dbReference type="InParanoid" id="Q2QXC6"/>
<dbReference type="OMA" id="FMLILIR"/>
<dbReference type="OrthoDB" id="4062651at2759"/>
<dbReference type="Proteomes" id="UP000000763">
    <property type="component" value="Chromosome 12"/>
</dbReference>
<dbReference type="Proteomes" id="UP000059680">
    <property type="component" value="Chromosome 12"/>
</dbReference>
<dbReference type="ExpressionAtlas" id="Q2QXC6">
    <property type="expression patterns" value="baseline and differential"/>
</dbReference>
<dbReference type="GO" id="GO:0005737">
    <property type="term" value="C:cytoplasm"/>
    <property type="evidence" value="ECO:0000318"/>
    <property type="project" value="GO_Central"/>
</dbReference>
<dbReference type="GO" id="GO:0005524">
    <property type="term" value="F:ATP binding"/>
    <property type="evidence" value="ECO:0007669"/>
    <property type="project" value="UniProtKB-KW"/>
</dbReference>
<dbReference type="GO" id="GO:0106310">
    <property type="term" value="F:protein serine kinase activity"/>
    <property type="evidence" value="ECO:0007669"/>
    <property type="project" value="RHEA"/>
</dbReference>
<dbReference type="GO" id="GO:0004674">
    <property type="term" value="F:protein serine/threonine kinase activity"/>
    <property type="evidence" value="ECO:0000318"/>
    <property type="project" value="GO_Central"/>
</dbReference>
<dbReference type="GO" id="GO:0035556">
    <property type="term" value="P:intracellular signal transduction"/>
    <property type="evidence" value="ECO:0000318"/>
    <property type="project" value="GO_Central"/>
</dbReference>
<dbReference type="FunFam" id="1.10.510.10:FF:000046">
    <property type="entry name" value="probable serine/threonine-protein kinase WNK9"/>
    <property type="match status" value="1"/>
</dbReference>
<dbReference type="FunFam" id="3.30.200.20:FF:000427">
    <property type="entry name" value="Wnk protein kinase"/>
    <property type="match status" value="1"/>
</dbReference>
<dbReference type="Gene3D" id="3.30.200.20">
    <property type="entry name" value="Phosphorylase Kinase, domain 1"/>
    <property type="match status" value="1"/>
</dbReference>
<dbReference type="Gene3D" id="1.10.510.10">
    <property type="entry name" value="Transferase(Phosphotransferase) domain 1"/>
    <property type="match status" value="1"/>
</dbReference>
<dbReference type="InterPro" id="IPR011009">
    <property type="entry name" value="Kinase-like_dom_sf"/>
</dbReference>
<dbReference type="InterPro" id="IPR000719">
    <property type="entry name" value="Prot_kinase_dom"/>
</dbReference>
<dbReference type="InterPro" id="IPR008271">
    <property type="entry name" value="Ser/Thr_kinase_AS"/>
</dbReference>
<dbReference type="InterPro" id="IPR050588">
    <property type="entry name" value="WNK_Ser-Thr_kinase"/>
</dbReference>
<dbReference type="PANTHER" id="PTHR13902">
    <property type="entry name" value="SERINE/THREONINE-PROTEIN KINASE WNK WITH NO LYSINE -RELATED"/>
    <property type="match status" value="1"/>
</dbReference>
<dbReference type="Pfam" id="PF00069">
    <property type="entry name" value="Pkinase"/>
    <property type="match status" value="1"/>
</dbReference>
<dbReference type="SMART" id="SM00220">
    <property type="entry name" value="S_TKc"/>
    <property type="match status" value="1"/>
</dbReference>
<dbReference type="SUPFAM" id="SSF56112">
    <property type="entry name" value="Protein kinase-like (PK-like)"/>
    <property type="match status" value="1"/>
</dbReference>
<dbReference type="PROSITE" id="PS50011">
    <property type="entry name" value="PROTEIN_KINASE_DOM"/>
    <property type="match status" value="1"/>
</dbReference>
<dbReference type="PROSITE" id="PS00108">
    <property type="entry name" value="PROTEIN_KINASE_ST"/>
    <property type="match status" value="1"/>
</dbReference>
<accession>Q2QXC6</accession>
<accession>B7EMN3</accession>
<gene>
    <name type="primary">WNK9</name>
    <name type="ordered locus">Os12g0162100</name>
    <name type="ordered locus">LOC_Os12g06490</name>
</gene>
<name>WNK9_ORYSJ</name>
<comment type="catalytic activity">
    <reaction>
        <text>L-seryl-[protein] + ATP = O-phospho-L-seryl-[protein] + ADP + H(+)</text>
        <dbReference type="Rhea" id="RHEA:17989"/>
        <dbReference type="Rhea" id="RHEA-COMP:9863"/>
        <dbReference type="Rhea" id="RHEA-COMP:11604"/>
        <dbReference type="ChEBI" id="CHEBI:15378"/>
        <dbReference type="ChEBI" id="CHEBI:29999"/>
        <dbReference type="ChEBI" id="CHEBI:30616"/>
        <dbReference type="ChEBI" id="CHEBI:83421"/>
        <dbReference type="ChEBI" id="CHEBI:456216"/>
        <dbReference type="EC" id="2.7.11.1"/>
    </reaction>
</comment>
<comment type="catalytic activity">
    <reaction>
        <text>L-threonyl-[protein] + ATP = O-phospho-L-threonyl-[protein] + ADP + H(+)</text>
        <dbReference type="Rhea" id="RHEA:46608"/>
        <dbReference type="Rhea" id="RHEA-COMP:11060"/>
        <dbReference type="Rhea" id="RHEA-COMP:11605"/>
        <dbReference type="ChEBI" id="CHEBI:15378"/>
        <dbReference type="ChEBI" id="CHEBI:30013"/>
        <dbReference type="ChEBI" id="CHEBI:30616"/>
        <dbReference type="ChEBI" id="CHEBI:61977"/>
        <dbReference type="ChEBI" id="CHEBI:456216"/>
        <dbReference type="EC" id="2.7.11.1"/>
    </reaction>
</comment>
<comment type="similarity">
    <text evidence="3">Belongs to the protein kinase superfamily. Ser/Thr protein kinase family. WNK subfamily.</text>
</comment>
<comment type="caution">
    <text evidence="1">Was named WNK/'with no lysine(K)' because key residues for catalysis, including the lysine involved in ATP binding, are either not conserved or differ compared to the residues described in other kinase family proteins.</text>
</comment>